<comment type="function">
    <text evidence="1">Attaches a formyl group to the free amino group of methionyl-tRNA(fMet). The formyl group appears to play a dual role in the initiator identity of N-formylmethionyl-tRNA by promoting its recognition by IF2 and preventing the misappropriation of this tRNA by the elongation apparatus.</text>
</comment>
<comment type="catalytic activity">
    <reaction evidence="1">
        <text>L-methionyl-tRNA(fMet) + (6R)-10-formyltetrahydrofolate = N-formyl-L-methionyl-tRNA(fMet) + (6S)-5,6,7,8-tetrahydrofolate + H(+)</text>
        <dbReference type="Rhea" id="RHEA:24380"/>
        <dbReference type="Rhea" id="RHEA-COMP:9952"/>
        <dbReference type="Rhea" id="RHEA-COMP:9953"/>
        <dbReference type="ChEBI" id="CHEBI:15378"/>
        <dbReference type="ChEBI" id="CHEBI:57453"/>
        <dbReference type="ChEBI" id="CHEBI:78530"/>
        <dbReference type="ChEBI" id="CHEBI:78844"/>
        <dbReference type="ChEBI" id="CHEBI:195366"/>
        <dbReference type="EC" id="2.1.2.9"/>
    </reaction>
</comment>
<comment type="similarity">
    <text evidence="1">Belongs to the Fmt family.</text>
</comment>
<reference key="1">
    <citation type="submission" date="2006-09" db="EMBL/GenBank/DDBJ databases">
        <authorList>
            <consortium name="The Klebsiella pneumonia Genome Sequencing Project"/>
            <person name="McClelland M."/>
            <person name="Sanderson E.K."/>
            <person name="Spieth J."/>
            <person name="Clifton W.S."/>
            <person name="Latreille P."/>
            <person name="Sabo A."/>
            <person name="Pepin K."/>
            <person name="Bhonagiri V."/>
            <person name="Porwollik S."/>
            <person name="Ali J."/>
            <person name="Wilson R.K."/>
        </authorList>
    </citation>
    <scope>NUCLEOTIDE SEQUENCE [LARGE SCALE GENOMIC DNA]</scope>
    <source>
        <strain>ATCC 700721 / MGH 78578</strain>
    </source>
</reference>
<dbReference type="EC" id="2.1.2.9" evidence="1"/>
<dbReference type="EMBL" id="CP000647">
    <property type="protein sequence ID" value="ABR79075.1"/>
    <property type="molecule type" value="Genomic_DNA"/>
</dbReference>
<dbReference type="RefSeq" id="WP_004150007.1">
    <property type="nucleotide sequence ID" value="NC_009648.1"/>
</dbReference>
<dbReference type="SMR" id="A6TEU1"/>
<dbReference type="STRING" id="272620.KPN_03688"/>
<dbReference type="jPOST" id="A6TEU1"/>
<dbReference type="PaxDb" id="272620-KPN_03688"/>
<dbReference type="EnsemblBacteria" id="ABR79075">
    <property type="protein sequence ID" value="ABR79075"/>
    <property type="gene ID" value="KPN_03688"/>
</dbReference>
<dbReference type="KEGG" id="kpn:KPN_03688"/>
<dbReference type="HOGENOM" id="CLU_033347_1_2_6"/>
<dbReference type="Proteomes" id="UP000000265">
    <property type="component" value="Chromosome"/>
</dbReference>
<dbReference type="GO" id="GO:0005829">
    <property type="term" value="C:cytosol"/>
    <property type="evidence" value="ECO:0007669"/>
    <property type="project" value="TreeGrafter"/>
</dbReference>
<dbReference type="GO" id="GO:0004479">
    <property type="term" value="F:methionyl-tRNA formyltransferase activity"/>
    <property type="evidence" value="ECO:0007669"/>
    <property type="project" value="UniProtKB-UniRule"/>
</dbReference>
<dbReference type="CDD" id="cd08646">
    <property type="entry name" value="FMT_core_Met-tRNA-FMT_N"/>
    <property type="match status" value="1"/>
</dbReference>
<dbReference type="CDD" id="cd08704">
    <property type="entry name" value="Met_tRNA_FMT_C"/>
    <property type="match status" value="1"/>
</dbReference>
<dbReference type="FunFam" id="3.10.25.10:FF:000001">
    <property type="entry name" value="Methionyl-tRNA formyltransferase"/>
    <property type="match status" value="1"/>
</dbReference>
<dbReference type="FunFam" id="3.40.50.170:FF:000003">
    <property type="entry name" value="Methionyl-tRNA formyltransferase"/>
    <property type="match status" value="1"/>
</dbReference>
<dbReference type="Gene3D" id="3.10.25.10">
    <property type="entry name" value="Formyl transferase, C-terminal domain"/>
    <property type="match status" value="1"/>
</dbReference>
<dbReference type="Gene3D" id="3.40.50.170">
    <property type="entry name" value="Formyl transferase, N-terminal domain"/>
    <property type="match status" value="1"/>
</dbReference>
<dbReference type="HAMAP" id="MF_00182">
    <property type="entry name" value="Formyl_trans"/>
    <property type="match status" value="1"/>
</dbReference>
<dbReference type="InterPro" id="IPR005794">
    <property type="entry name" value="Fmt"/>
</dbReference>
<dbReference type="InterPro" id="IPR005793">
    <property type="entry name" value="Formyl_trans_C"/>
</dbReference>
<dbReference type="InterPro" id="IPR037022">
    <property type="entry name" value="Formyl_trans_C_sf"/>
</dbReference>
<dbReference type="InterPro" id="IPR002376">
    <property type="entry name" value="Formyl_transf_N"/>
</dbReference>
<dbReference type="InterPro" id="IPR036477">
    <property type="entry name" value="Formyl_transf_N_sf"/>
</dbReference>
<dbReference type="InterPro" id="IPR011034">
    <property type="entry name" value="Formyl_transferase-like_C_sf"/>
</dbReference>
<dbReference type="InterPro" id="IPR001555">
    <property type="entry name" value="GART_AS"/>
</dbReference>
<dbReference type="InterPro" id="IPR044135">
    <property type="entry name" value="Met-tRNA-FMT_C"/>
</dbReference>
<dbReference type="InterPro" id="IPR041711">
    <property type="entry name" value="Met-tRNA-FMT_N"/>
</dbReference>
<dbReference type="NCBIfam" id="TIGR00460">
    <property type="entry name" value="fmt"/>
    <property type="match status" value="1"/>
</dbReference>
<dbReference type="PANTHER" id="PTHR11138">
    <property type="entry name" value="METHIONYL-TRNA FORMYLTRANSFERASE"/>
    <property type="match status" value="1"/>
</dbReference>
<dbReference type="PANTHER" id="PTHR11138:SF5">
    <property type="entry name" value="METHIONYL-TRNA FORMYLTRANSFERASE, MITOCHONDRIAL"/>
    <property type="match status" value="1"/>
</dbReference>
<dbReference type="Pfam" id="PF02911">
    <property type="entry name" value="Formyl_trans_C"/>
    <property type="match status" value="1"/>
</dbReference>
<dbReference type="Pfam" id="PF00551">
    <property type="entry name" value="Formyl_trans_N"/>
    <property type="match status" value="1"/>
</dbReference>
<dbReference type="SUPFAM" id="SSF50486">
    <property type="entry name" value="FMT C-terminal domain-like"/>
    <property type="match status" value="1"/>
</dbReference>
<dbReference type="SUPFAM" id="SSF53328">
    <property type="entry name" value="Formyltransferase"/>
    <property type="match status" value="1"/>
</dbReference>
<dbReference type="PROSITE" id="PS00373">
    <property type="entry name" value="GART"/>
    <property type="match status" value="1"/>
</dbReference>
<gene>
    <name evidence="1" type="primary">fmt</name>
    <name type="ordered locus">KPN78578_36510</name>
    <name type="ORF">KPN_03688</name>
</gene>
<feature type="chain" id="PRO_1000020082" description="Methionyl-tRNA formyltransferase">
    <location>
        <begin position="1"/>
        <end position="315"/>
    </location>
</feature>
<feature type="binding site" evidence="1">
    <location>
        <begin position="113"/>
        <end position="116"/>
    </location>
    <ligand>
        <name>(6S)-5,6,7,8-tetrahydrofolate</name>
        <dbReference type="ChEBI" id="CHEBI:57453"/>
    </ligand>
</feature>
<accession>A6TEU1</accession>
<keyword id="KW-0648">Protein biosynthesis</keyword>
<keyword id="KW-0808">Transferase</keyword>
<organism>
    <name type="scientific">Klebsiella pneumoniae subsp. pneumoniae (strain ATCC 700721 / MGH 78578)</name>
    <dbReference type="NCBI Taxonomy" id="272620"/>
    <lineage>
        <taxon>Bacteria</taxon>
        <taxon>Pseudomonadati</taxon>
        <taxon>Pseudomonadota</taxon>
        <taxon>Gammaproteobacteria</taxon>
        <taxon>Enterobacterales</taxon>
        <taxon>Enterobacteriaceae</taxon>
        <taxon>Klebsiella/Raoultella group</taxon>
        <taxon>Klebsiella</taxon>
        <taxon>Klebsiella pneumoniae complex</taxon>
    </lineage>
</organism>
<sequence>MSQSLRIIFAGTPDFAARHLDALLSSEHQVVGVFTQPDRPAGRGKKLMPSPVKVLAEAHNLPVFQPSSLRPQDNQRLVADLGADIMVVVAYGLILPKAVLEMPRLGCINVHGSLLPRWRGAAPIQRSLWAGDSETGVTIMQMDVGLDTGDMLYKLSCPITAEDTSGSLYDKLAELGPQGLLATLAQLANGTARPEVQDESLVCHAEKLSKEEARIDWSLSAAQLERCIRAFNPWPMSWLEIDGQPVKVWRASVIAEAAHAEPGTIVAATKQGIQVATGDGILSLESLQPAGKKAMSAQDLLNSRREWFIPGTRLA</sequence>
<protein>
    <recommendedName>
        <fullName evidence="1">Methionyl-tRNA formyltransferase</fullName>
        <ecNumber evidence="1">2.1.2.9</ecNumber>
    </recommendedName>
</protein>
<evidence type="ECO:0000255" key="1">
    <source>
        <dbReference type="HAMAP-Rule" id="MF_00182"/>
    </source>
</evidence>
<proteinExistence type="inferred from homology"/>
<name>FMT_KLEP7</name>